<protein>
    <recommendedName>
        <fullName>Amyloid-beta A4 precursor protein-binding family A member 3</fullName>
    </recommendedName>
    <alternativeName>
        <fullName>Adapter protein X11gamma</fullName>
    </alternativeName>
    <alternativeName>
        <fullName>Neuron-specific X11L2 protein</fullName>
    </alternativeName>
    <alternativeName>
        <fullName>Neuronal Munc18-1-interacting protein 3</fullName>
        <shortName>Mint-3</shortName>
    </alternativeName>
</protein>
<dbReference type="EMBL" id="AB021638">
    <property type="protein sequence ID" value="BAA74430.1"/>
    <property type="molecule type" value="mRNA"/>
</dbReference>
<dbReference type="EMBL" id="AC005954">
    <property type="protein sequence ID" value="AAC72275.1"/>
    <property type="molecule type" value="Genomic_DNA"/>
</dbReference>
<dbReference type="EMBL" id="BC086306">
    <property type="protein sequence ID" value="AAH86306.1"/>
    <property type="molecule type" value="mRNA"/>
</dbReference>
<dbReference type="EMBL" id="AB023431">
    <property type="protein sequence ID" value="BAA83094.1"/>
    <property type="molecule type" value="Genomic_DNA"/>
</dbReference>
<dbReference type="EMBL" id="AF029110">
    <property type="protein sequence ID" value="AAC17979.1"/>
    <property type="molecule type" value="mRNA"/>
</dbReference>
<dbReference type="CCDS" id="CCDS12110.1"/>
<dbReference type="PIR" id="JG0181">
    <property type="entry name" value="JG0181"/>
</dbReference>
<dbReference type="RefSeq" id="NP_004877.1">
    <property type="nucleotide sequence ID" value="NM_004886.4"/>
</dbReference>
<dbReference type="PDB" id="2YT7">
    <property type="method" value="NMR"/>
    <property type="chains" value="A=390-483"/>
</dbReference>
<dbReference type="PDB" id="2YT8">
    <property type="method" value="NMR"/>
    <property type="chains" value="A=483-569"/>
</dbReference>
<dbReference type="PDB" id="5UWS">
    <property type="method" value="X-ray"/>
    <property type="resolution" value="2.40 A"/>
    <property type="chains" value="D=55-72"/>
</dbReference>
<dbReference type="PDBsum" id="2YT7"/>
<dbReference type="PDBsum" id="2YT8"/>
<dbReference type="PDBsum" id="5UWS"/>
<dbReference type="SMR" id="O96018"/>
<dbReference type="BioGRID" id="114920">
    <property type="interactions" value="64"/>
</dbReference>
<dbReference type="FunCoup" id="O96018">
    <property type="interactions" value="299"/>
</dbReference>
<dbReference type="IntAct" id="O96018">
    <property type="interactions" value="60"/>
</dbReference>
<dbReference type="MINT" id="O96018"/>
<dbReference type="STRING" id="9606.ENSP00000315136"/>
<dbReference type="GlyGen" id="O96018">
    <property type="glycosylation" value="1 site, 1 O-linked glycan (1 site)"/>
</dbReference>
<dbReference type="iPTMnet" id="O96018"/>
<dbReference type="PhosphoSitePlus" id="O96018"/>
<dbReference type="BioMuta" id="APBA3"/>
<dbReference type="jPOST" id="O96018"/>
<dbReference type="MassIVE" id="O96018"/>
<dbReference type="PaxDb" id="9606-ENSP00000315136"/>
<dbReference type="PeptideAtlas" id="O96018"/>
<dbReference type="ProteomicsDB" id="51210"/>
<dbReference type="Pumba" id="O96018"/>
<dbReference type="Antibodypedia" id="23338">
    <property type="antibodies" value="164 antibodies from 28 providers"/>
</dbReference>
<dbReference type="DNASU" id="9546"/>
<dbReference type="Ensembl" id="ENST00000316757.4">
    <property type="protein sequence ID" value="ENSP00000315136.2"/>
    <property type="gene ID" value="ENSG00000011132.12"/>
</dbReference>
<dbReference type="GeneID" id="9546"/>
<dbReference type="KEGG" id="hsa:9546"/>
<dbReference type="MANE-Select" id="ENST00000316757.4">
    <property type="protein sequence ID" value="ENSP00000315136.2"/>
    <property type="RefSeq nucleotide sequence ID" value="NM_004886.4"/>
    <property type="RefSeq protein sequence ID" value="NP_004877.1"/>
</dbReference>
<dbReference type="UCSC" id="uc002lyp.2">
    <property type="organism name" value="human"/>
</dbReference>
<dbReference type="AGR" id="HGNC:580"/>
<dbReference type="CTD" id="9546"/>
<dbReference type="DisGeNET" id="9546"/>
<dbReference type="GeneCards" id="APBA3"/>
<dbReference type="HGNC" id="HGNC:580">
    <property type="gene designation" value="APBA3"/>
</dbReference>
<dbReference type="HPA" id="ENSG00000011132">
    <property type="expression patterns" value="Low tissue specificity"/>
</dbReference>
<dbReference type="MIM" id="604262">
    <property type="type" value="gene"/>
</dbReference>
<dbReference type="neXtProt" id="NX_O96018"/>
<dbReference type="OpenTargets" id="ENSG00000011132"/>
<dbReference type="PharmGKB" id="PA24872"/>
<dbReference type="VEuPathDB" id="HostDB:ENSG00000011132"/>
<dbReference type="eggNOG" id="KOG3605">
    <property type="taxonomic scope" value="Eukaryota"/>
</dbReference>
<dbReference type="GeneTree" id="ENSGT00940000160384"/>
<dbReference type="HOGENOM" id="CLU_013563_2_0_1"/>
<dbReference type="InParanoid" id="O96018"/>
<dbReference type="OMA" id="HCEECPP"/>
<dbReference type="OrthoDB" id="5987010at2759"/>
<dbReference type="PAN-GO" id="O96018">
    <property type="GO annotations" value="5 GO annotations based on evolutionary models"/>
</dbReference>
<dbReference type="PhylomeDB" id="O96018"/>
<dbReference type="TreeFam" id="TF315245"/>
<dbReference type="PathwayCommons" id="O96018"/>
<dbReference type="Reactome" id="R-HSA-6794361">
    <property type="pathway name" value="Neurexins and neuroligins"/>
</dbReference>
<dbReference type="SignaLink" id="O96018"/>
<dbReference type="SIGNOR" id="O96018"/>
<dbReference type="BioGRID-ORCS" id="9546">
    <property type="hits" value="13 hits in 1150 CRISPR screens"/>
</dbReference>
<dbReference type="ChiTaRS" id="APBA3">
    <property type="organism name" value="human"/>
</dbReference>
<dbReference type="EvolutionaryTrace" id="O96018"/>
<dbReference type="GeneWiki" id="APBA3"/>
<dbReference type="GenomeRNAi" id="9546"/>
<dbReference type="Pharos" id="O96018">
    <property type="development level" value="Tbio"/>
</dbReference>
<dbReference type="PRO" id="PR:O96018"/>
<dbReference type="Proteomes" id="UP000005640">
    <property type="component" value="Chromosome 19"/>
</dbReference>
<dbReference type="RNAct" id="O96018">
    <property type="molecule type" value="protein"/>
</dbReference>
<dbReference type="Bgee" id="ENSG00000011132">
    <property type="expression patterns" value="Expressed in pancreatic ductal cell and 171 other cell types or tissues"/>
</dbReference>
<dbReference type="GO" id="GO:0005737">
    <property type="term" value="C:cytoplasm"/>
    <property type="evidence" value="ECO:0000318"/>
    <property type="project" value="GO_Central"/>
</dbReference>
<dbReference type="GO" id="GO:0043197">
    <property type="term" value="C:dendritic spine"/>
    <property type="evidence" value="ECO:0000318"/>
    <property type="project" value="GO_Central"/>
</dbReference>
<dbReference type="GO" id="GO:0048471">
    <property type="term" value="C:perinuclear region of cytoplasm"/>
    <property type="evidence" value="ECO:0000314"/>
    <property type="project" value="UniProtKB"/>
</dbReference>
<dbReference type="GO" id="GO:0005886">
    <property type="term" value="C:plasma membrane"/>
    <property type="evidence" value="ECO:0000318"/>
    <property type="project" value="GO_Central"/>
</dbReference>
<dbReference type="GO" id="GO:0001540">
    <property type="term" value="F:amyloid-beta binding"/>
    <property type="evidence" value="ECO:0000318"/>
    <property type="project" value="GO_Central"/>
</dbReference>
<dbReference type="GO" id="GO:0019899">
    <property type="term" value="F:enzyme binding"/>
    <property type="evidence" value="ECO:0000353"/>
    <property type="project" value="UniProtKB"/>
</dbReference>
<dbReference type="GO" id="GO:0004857">
    <property type="term" value="F:enzyme inhibitor activity"/>
    <property type="evidence" value="ECO:0000314"/>
    <property type="project" value="UniProtKB"/>
</dbReference>
<dbReference type="GO" id="GO:0007268">
    <property type="term" value="P:chemical synaptic transmission"/>
    <property type="evidence" value="ECO:0000318"/>
    <property type="project" value="GO_Central"/>
</dbReference>
<dbReference type="GO" id="GO:0001701">
    <property type="term" value="P:in utero embryonic development"/>
    <property type="evidence" value="ECO:0007669"/>
    <property type="project" value="Ensembl"/>
</dbReference>
<dbReference type="GO" id="GO:0043086">
    <property type="term" value="P:negative regulation of catalytic activity"/>
    <property type="evidence" value="ECO:0000314"/>
    <property type="project" value="UniProtKB"/>
</dbReference>
<dbReference type="GO" id="GO:0015031">
    <property type="term" value="P:protein transport"/>
    <property type="evidence" value="ECO:0007669"/>
    <property type="project" value="UniProtKB-KW"/>
</dbReference>
<dbReference type="GO" id="GO:0010468">
    <property type="term" value="P:regulation of gene expression"/>
    <property type="evidence" value="ECO:0007669"/>
    <property type="project" value="Ensembl"/>
</dbReference>
<dbReference type="CDD" id="cd06720">
    <property type="entry name" value="PDZ1_APBA1_3-like"/>
    <property type="match status" value="1"/>
</dbReference>
<dbReference type="CDD" id="cd06793">
    <property type="entry name" value="PDZ2_APBA1_3-like"/>
    <property type="match status" value="1"/>
</dbReference>
<dbReference type="CDD" id="cd01208">
    <property type="entry name" value="PTB_X11"/>
    <property type="match status" value="1"/>
</dbReference>
<dbReference type="FunFam" id="2.30.29.30:FF:000222">
    <property type="entry name" value="amyloid beta A4 precursor protein-binding family A member 3"/>
    <property type="match status" value="1"/>
</dbReference>
<dbReference type="FunFam" id="2.30.42.10:FF:000159">
    <property type="entry name" value="amyloid beta A4 precursor protein-binding family A member 3"/>
    <property type="match status" value="1"/>
</dbReference>
<dbReference type="FunFam" id="2.30.42.10:FF:000007">
    <property type="entry name" value="Amyloid beta A4 protein-binding family A member"/>
    <property type="match status" value="1"/>
</dbReference>
<dbReference type="Gene3D" id="2.30.42.10">
    <property type="match status" value="2"/>
</dbReference>
<dbReference type="Gene3D" id="2.30.29.30">
    <property type="entry name" value="Pleckstrin-homology domain (PH domain)/Phosphotyrosine-binding domain (PTB)"/>
    <property type="match status" value="1"/>
</dbReference>
<dbReference type="InterPro" id="IPR051230">
    <property type="entry name" value="APP-Binding"/>
</dbReference>
<dbReference type="InterPro" id="IPR001478">
    <property type="entry name" value="PDZ"/>
</dbReference>
<dbReference type="InterPro" id="IPR036034">
    <property type="entry name" value="PDZ_sf"/>
</dbReference>
<dbReference type="InterPro" id="IPR011993">
    <property type="entry name" value="PH-like_dom_sf"/>
</dbReference>
<dbReference type="InterPro" id="IPR006020">
    <property type="entry name" value="PTB/PI_dom"/>
</dbReference>
<dbReference type="PANTHER" id="PTHR12345:SF9">
    <property type="entry name" value="AMYLOID-BETA A4 PRECURSOR PROTEIN-BINDING FAMILY A MEMBER 3"/>
    <property type="match status" value="1"/>
</dbReference>
<dbReference type="PANTHER" id="PTHR12345">
    <property type="entry name" value="SYNTENIN RELATED"/>
    <property type="match status" value="1"/>
</dbReference>
<dbReference type="Pfam" id="PF00595">
    <property type="entry name" value="PDZ"/>
    <property type="match status" value="2"/>
</dbReference>
<dbReference type="Pfam" id="PF00640">
    <property type="entry name" value="PID"/>
    <property type="match status" value="1"/>
</dbReference>
<dbReference type="SMART" id="SM00228">
    <property type="entry name" value="PDZ"/>
    <property type="match status" value="2"/>
</dbReference>
<dbReference type="SMART" id="SM00462">
    <property type="entry name" value="PTB"/>
    <property type="match status" value="1"/>
</dbReference>
<dbReference type="SUPFAM" id="SSF50156">
    <property type="entry name" value="PDZ domain-like"/>
    <property type="match status" value="2"/>
</dbReference>
<dbReference type="SUPFAM" id="SSF50729">
    <property type="entry name" value="PH domain-like"/>
    <property type="match status" value="1"/>
</dbReference>
<dbReference type="PROSITE" id="PS50106">
    <property type="entry name" value="PDZ"/>
    <property type="match status" value="2"/>
</dbReference>
<dbReference type="PROSITE" id="PS01179">
    <property type="entry name" value="PID"/>
    <property type="match status" value="1"/>
</dbReference>
<evidence type="ECO:0000250" key="1">
    <source>
        <dbReference type="UniProtKB" id="O70248"/>
    </source>
</evidence>
<evidence type="ECO:0000255" key="2">
    <source>
        <dbReference type="PROSITE-ProRule" id="PRU00143"/>
    </source>
</evidence>
<evidence type="ECO:0000255" key="3">
    <source>
        <dbReference type="PROSITE-ProRule" id="PRU00148"/>
    </source>
</evidence>
<evidence type="ECO:0000256" key="4">
    <source>
        <dbReference type="SAM" id="MobiDB-lite"/>
    </source>
</evidence>
<evidence type="ECO:0000269" key="5">
    <source>
    </source>
</evidence>
<evidence type="ECO:0000269" key="6">
    <source>
    </source>
</evidence>
<evidence type="ECO:0000305" key="7"/>
<evidence type="ECO:0007744" key="8">
    <source>
    </source>
</evidence>
<evidence type="ECO:0007744" key="9">
    <source>
    </source>
</evidence>
<evidence type="ECO:0007744" key="10">
    <source>
    </source>
</evidence>
<evidence type="ECO:0007829" key="11">
    <source>
        <dbReference type="PDB" id="2YT7"/>
    </source>
</evidence>
<evidence type="ECO:0007829" key="12">
    <source>
        <dbReference type="PDB" id="2YT8"/>
    </source>
</evidence>
<evidence type="ECO:0007829" key="13">
    <source>
        <dbReference type="PDB" id="5UWS"/>
    </source>
</evidence>
<accession>O96018</accession>
<accession>O60483</accession>
<accession>Q9UPZ2</accession>
<gene>
    <name type="primary">APBA3</name>
    <name type="synonym">MINT3</name>
    <name type="synonym">X11L2</name>
</gene>
<organism>
    <name type="scientific">Homo sapiens</name>
    <name type="common">Human</name>
    <dbReference type="NCBI Taxonomy" id="9606"/>
    <lineage>
        <taxon>Eukaryota</taxon>
        <taxon>Metazoa</taxon>
        <taxon>Chordata</taxon>
        <taxon>Craniata</taxon>
        <taxon>Vertebrata</taxon>
        <taxon>Euteleostomi</taxon>
        <taxon>Mammalia</taxon>
        <taxon>Eutheria</taxon>
        <taxon>Euarchontoglires</taxon>
        <taxon>Primates</taxon>
        <taxon>Haplorrhini</taxon>
        <taxon>Catarrhini</taxon>
        <taxon>Hominidae</taxon>
        <taxon>Homo</taxon>
    </lineage>
</organism>
<feature type="chain" id="PRO_0000064620" description="Amyloid-beta A4 precursor protein-binding family A member 3">
    <location>
        <begin position="1"/>
        <end position="575"/>
    </location>
</feature>
<feature type="domain" description="PID" evidence="3">
    <location>
        <begin position="217"/>
        <end position="381"/>
    </location>
</feature>
<feature type="domain" description="PDZ 1" evidence="2">
    <location>
        <begin position="394"/>
        <end position="480"/>
    </location>
</feature>
<feature type="domain" description="PDZ 2" evidence="2">
    <location>
        <begin position="485"/>
        <end position="560"/>
    </location>
</feature>
<feature type="region of interest" description="Disordered" evidence="4">
    <location>
        <begin position="1"/>
        <end position="50"/>
    </location>
</feature>
<feature type="region of interest" description="Disordered" evidence="4">
    <location>
        <begin position="118"/>
        <end position="211"/>
    </location>
</feature>
<feature type="region of interest" description="Required for interaction with NECAB3" evidence="6">
    <location>
        <begin position="215"/>
        <end position="364"/>
    </location>
</feature>
<feature type="compositionally biased region" description="Polar residues" evidence="4">
    <location>
        <begin position="1"/>
        <end position="10"/>
    </location>
</feature>
<feature type="compositionally biased region" description="Acidic residues" evidence="4">
    <location>
        <begin position="143"/>
        <end position="153"/>
    </location>
</feature>
<feature type="compositionally biased region" description="Low complexity" evidence="4">
    <location>
        <begin position="156"/>
        <end position="184"/>
    </location>
</feature>
<feature type="modified residue" description="N-acetylmethionine" evidence="9">
    <location>
        <position position="1"/>
    </location>
</feature>
<feature type="modified residue" description="Phosphoserine" evidence="10">
    <location>
        <position position="11"/>
    </location>
</feature>
<feature type="modified residue" description="Phosphoserine" evidence="1">
    <location>
        <position position="171"/>
    </location>
</feature>
<feature type="modified residue" description="Phosphoserine" evidence="8">
    <location>
        <position position="372"/>
    </location>
</feature>
<feature type="sequence variant" id="VAR_050666" description="In dbSNP:rs35932323.">
    <original>W</original>
    <variation>L</variation>
    <location>
        <position position="154"/>
    </location>
</feature>
<feature type="sequence variant" id="VAR_020134" description="In dbSNP:rs3746119.">
    <original>K</original>
    <variation>T</variation>
    <location>
        <position position="276"/>
    </location>
</feature>
<feature type="sequence variant" id="VAR_047952" description="In dbSNP:rs8102086." evidence="8">
    <original>C</original>
    <variation>R</variation>
    <location>
        <position position="376"/>
    </location>
</feature>
<feature type="sequence variant" id="VAR_011822" description="In dbSNP:rs1045236.">
    <original>I</original>
    <variation>F</variation>
    <location>
        <position position="527"/>
    </location>
</feature>
<feature type="sequence conflict" description="In Ref. 5; AAC17979." evidence="7" ref="5">
    <original>I</original>
    <variation>IVRPRPLAPGWGGRAALSTAPEQPPPLSRAPLFLPQ</variation>
    <location>
        <position position="505"/>
    </location>
</feature>
<feature type="helix" evidence="13">
    <location>
        <begin position="57"/>
        <end position="65"/>
    </location>
</feature>
<feature type="strand" evidence="11">
    <location>
        <begin position="393"/>
        <end position="398"/>
    </location>
</feature>
<feature type="strand" evidence="11">
    <location>
        <begin position="407"/>
        <end position="411"/>
    </location>
</feature>
<feature type="strand" evidence="11">
    <location>
        <begin position="415"/>
        <end position="418"/>
    </location>
</feature>
<feature type="strand" evidence="11">
    <location>
        <begin position="421"/>
        <end position="426"/>
    </location>
</feature>
<feature type="helix" evidence="11">
    <location>
        <begin position="433"/>
        <end position="435"/>
    </location>
</feature>
<feature type="strand" evidence="11">
    <location>
        <begin position="443"/>
        <end position="449"/>
    </location>
</feature>
<feature type="helix" evidence="11">
    <location>
        <begin position="457"/>
        <end position="466"/>
    </location>
</feature>
<feature type="turn" evidence="11">
    <location>
        <begin position="467"/>
        <end position="469"/>
    </location>
</feature>
<feature type="strand" evidence="11">
    <location>
        <begin position="470"/>
        <end position="477"/>
    </location>
</feature>
<feature type="strand" evidence="12">
    <location>
        <begin position="483"/>
        <end position="490"/>
    </location>
</feature>
<feature type="strand" evidence="12">
    <location>
        <begin position="493"/>
        <end position="495"/>
    </location>
</feature>
<feature type="strand" evidence="12">
    <location>
        <begin position="498"/>
        <end position="502"/>
    </location>
</feature>
<feature type="strand" evidence="12">
    <location>
        <begin position="505"/>
        <end position="509"/>
    </location>
</feature>
<feature type="helix" evidence="12">
    <location>
        <begin position="515"/>
        <end position="518"/>
    </location>
</feature>
<feature type="strand" evidence="12">
    <location>
        <begin position="525"/>
        <end position="529"/>
    </location>
</feature>
<feature type="helix" evidence="12">
    <location>
        <begin position="539"/>
        <end position="548"/>
    </location>
</feature>
<feature type="strand" evidence="12">
    <location>
        <begin position="551"/>
        <end position="558"/>
    </location>
</feature>
<feature type="helix" evidence="12">
    <location>
        <begin position="560"/>
        <end position="566"/>
    </location>
</feature>
<keyword id="KW-0002">3D-structure</keyword>
<keyword id="KW-0007">Acetylation</keyword>
<keyword id="KW-0963">Cytoplasm</keyword>
<keyword id="KW-0597">Phosphoprotein</keyword>
<keyword id="KW-0653">Protein transport</keyword>
<keyword id="KW-1267">Proteomics identification</keyword>
<keyword id="KW-1185">Reference proteome</keyword>
<keyword id="KW-0677">Repeat</keyword>
<keyword id="KW-0813">Transport</keyword>
<name>APBA3_HUMAN</name>
<proteinExistence type="evidence at protein level"/>
<sequence>MDFPTISRSPSGPPAMDLEGPRDILVPSEDLTPDSQWDPMPGGPGSLSRMELDESSLQELVQQFEALPGDLVGPSPGGAPCPLHIATGHGLASQEIADAHGLLSAEAGRDDLLGLLHCEECPPSQTGPEEPLEPAPRLLQPPEDPDEDSDSPEWVEGASAEQEGSRSSSSSPEPWLETVPLVTPEEPPAGAQSPETLASYPAPQEVPGPCDHEDLLDGVIFGARYLGSTQLVSERNPPTSTRMAQAREAMDRVKAPDGETQPMTEVDLFVSTKRIKVLTADSQEAMMDHALHTISYTADIGCVLVLMARRRLARRPAPQDHGRRLYKMLCHVFYAEDAQLIAQAIGQAFAAAYSQFLRESGIDPSQVGVHPSPGACHLHNGDLDHFSNSDNCREVHLEKRRGEGLGVALVESGWGSLLPTAVIANLLHGGPAERSGALSIGDRLTAINGTSLVGLPLAACQAAVRETKSQTSVTLSIVHCPPVTTAIIHRPHAREQLGFCVEDGIICSLLRGGIAERGGIRVGHRIIEINGQSVVATPHARIIELLTEAYGEVHIKTMPAATYRLLTGQEQPVYL</sequence>
<reference key="1">
    <citation type="journal article" date="1999" name="Biochem. Biophys. Res. Commun.">
        <title>X11L2, a new member of X11 protein family interacts with Alzheimer's beta-amyloid precursor protein.</title>
        <authorList>
            <person name="Tanahashi H."/>
            <person name="Tabira T."/>
        </authorList>
    </citation>
    <scope>NUCLEOTIDE SEQUENCE [MRNA]</scope>
    <source>
        <tissue>Brain</tissue>
    </source>
</reference>
<reference key="2">
    <citation type="journal article" date="2004" name="Nature">
        <title>The DNA sequence and biology of human chromosome 19.</title>
        <authorList>
            <person name="Grimwood J."/>
            <person name="Gordon L.A."/>
            <person name="Olsen A.S."/>
            <person name="Terry A."/>
            <person name="Schmutz J."/>
            <person name="Lamerdin J.E."/>
            <person name="Hellsten U."/>
            <person name="Goodstein D."/>
            <person name="Couronne O."/>
            <person name="Tran-Gyamfi M."/>
            <person name="Aerts A."/>
            <person name="Altherr M."/>
            <person name="Ashworth L."/>
            <person name="Bajorek E."/>
            <person name="Black S."/>
            <person name="Branscomb E."/>
            <person name="Caenepeel S."/>
            <person name="Carrano A.V."/>
            <person name="Caoile C."/>
            <person name="Chan Y.M."/>
            <person name="Christensen M."/>
            <person name="Cleland C.A."/>
            <person name="Copeland A."/>
            <person name="Dalin E."/>
            <person name="Dehal P."/>
            <person name="Denys M."/>
            <person name="Detter J.C."/>
            <person name="Escobar J."/>
            <person name="Flowers D."/>
            <person name="Fotopulos D."/>
            <person name="Garcia C."/>
            <person name="Georgescu A.M."/>
            <person name="Glavina T."/>
            <person name="Gomez M."/>
            <person name="Gonzales E."/>
            <person name="Groza M."/>
            <person name="Hammon N."/>
            <person name="Hawkins T."/>
            <person name="Haydu L."/>
            <person name="Ho I."/>
            <person name="Huang W."/>
            <person name="Israni S."/>
            <person name="Jett J."/>
            <person name="Kadner K."/>
            <person name="Kimball H."/>
            <person name="Kobayashi A."/>
            <person name="Larionov V."/>
            <person name="Leem S.-H."/>
            <person name="Lopez F."/>
            <person name="Lou Y."/>
            <person name="Lowry S."/>
            <person name="Malfatti S."/>
            <person name="Martinez D."/>
            <person name="McCready P.M."/>
            <person name="Medina C."/>
            <person name="Morgan J."/>
            <person name="Nelson K."/>
            <person name="Nolan M."/>
            <person name="Ovcharenko I."/>
            <person name="Pitluck S."/>
            <person name="Pollard M."/>
            <person name="Popkie A.P."/>
            <person name="Predki P."/>
            <person name="Quan G."/>
            <person name="Ramirez L."/>
            <person name="Rash S."/>
            <person name="Retterer J."/>
            <person name="Rodriguez A."/>
            <person name="Rogers S."/>
            <person name="Salamov A."/>
            <person name="Salazar A."/>
            <person name="She X."/>
            <person name="Smith D."/>
            <person name="Slezak T."/>
            <person name="Solovyev V."/>
            <person name="Thayer N."/>
            <person name="Tice H."/>
            <person name="Tsai M."/>
            <person name="Ustaszewska A."/>
            <person name="Vo N."/>
            <person name="Wagner M."/>
            <person name="Wheeler J."/>
            <person name="Wu K."/>
            <person name="Xie G."/>
            <person name="Yang J."/>
            <person name="Dubchak I."/>
            <person name="Furey T.S."/>
            <person name="DeJong P."/>
            <person name="Dickson M."/>
            <person name="Gordon D."/>
            <person name="Eichler E.E."/>
            <person name="Pennacchio L.A."/>
            <person name="Richardson P."/>
            <person name="Stubbs L."/>
            <person name="Rokhsar D.S."/>
            <person name="Myers R.M."/>
            <person name="Rubin E.M."/>
            <person name="Lucas S.M."/>
        </authorList>
    </citation>
    <scope>NUCLEOTIDE SEQUENCE [LARGE SCALE GENOMIC DNA]</scope>
</reference>
<reference key="3">
    <citation type="journal article" date="2004" name="Genome Res.">
        <title>The status, quality, and expansion of the NIH full-length cDNA project: the Mammalian Gene Collection (MGC).</title>
        <authorList>
            <consortium name="The MGC Project Team"/>
        </authorList>
    </citation>
    <scope>NUCLEOTIDE SEQUENCE [LARGE SCALE MRNA]</scope>
    <source>
        <tissue>Lung</tissue>
    </source>
</reference>
<reference key="4">
    <citation type="journal article" date="1999" name="NeuroReport">
        <title>Genomic organization of the human X11L2 gene (APBA3), a third member of the X11 protein family interacting with Alzheimer's beta-amyloid precursor protein.</title>
        <authorList>
            <person name="Tanahashi H."/>
            <person name="Tabira T."/>
        </authorList>
    </citation>
    <scope>NUCLEOTIDE SEQUENCE [GENOMIC DNA] OF 207-575</scope>
</reference>
<reference key="5">
    <citation type="journal article" date="1998" name="Eur. J. Cell Biol.">
        <title>Mint 3: a ubiquitous mint isoform that does not bind to munc18-1 or -2.</title>
        <authorList>
            <person name="Okamoto M."/>
            <person name="Suedhof T.C."/>
        </authorList>
    </citation>
    <scope>NUCLEOTIDE SEQUENCE [MRNA] OF 472-575</scope>
</reference>
<reference key="6">
    <citation type="journal article" date="2008" name="Mol. Cell">
        <title>Kinase-selective enrichment enables quantitative phosphoproteomics of the kinome across the cell cycle.</title>
        <authorList>
            <person name="Daub H."/>
            <person name="Olsen J.V."/>
            <person name="Bairlein M."/>
            <person name="Gnad F."/>
            <person name="Oppermann F.S."/>
            <person name="Korner R."/>
            <person name="Greff Z."/>
            <person name="Keri G."/>
            <person name="Stemmann O."/>
            <person name="Mann M."/>
        </authorList>
    </citation>
    <scope>IDENTIFICATION BY MASS SPECTROMETRY [LARGE SCALE ANALYSIS]</scope>
    <source>
        <tissue>Cervix carcinoma</tissue>
    </source>
</reference>
<reference key="7">
    <citation type="journal article" date="2008" name="Proc. Natl. Acad. Sci. U.S.A.">
        <title>A quantitative atlas of mitotic phosphorylation.</title>
        <authorList>
            <person name="Dephoure N."/>
            <person name="Zhou C."/>
            <person name="Villen J."/>
            <person name="Beausoleil S.A."/>
            <person name="Bakalarski C.E."/>
            <person name="Elledge S.J."/>
            <person name="Gygi S.P."/>
        </authorList>
    </citation>
    <scope>PHOSPHORYLATION [LARGE SCALE ANALYSIS] AT SER-372</scope>
    <scope>VARIANT [LARGE SCALE ANALYSIS] ARG-376</scope>
    <scope>IDENTIFICATION BY MASS SPECTROMETRY [LARGE SCALE ANALYSIS]</scope>
    <source>
        <tissue>Cervix carcinoma</tissue>
    </source>
</reference>
<reference key="8">
    <citation type="journal article" date="2009" name="J. Biol. Chem.">
        <title>Mint3 enhances the activity of hypoxia-inducible factor-1 (HIF-1) in macrophages by suppressing the activity of factor inhibiting HIF-1.</title>
        <authorList>
            <person name="Sakamoto T."/>
            <person name="Seiki M."/>
        </authorList>
    </citation>
    <scope>FUNCTION</scope>
    <scope>INTERACTION WITH HIF1AN</scope>
    <scope>SUBCELLULAR LOCATION</scope>
</reference>
<reference key="9">
    <citation type="journal article" date="2009" name="Mol. Cell. Proteomics">
        <title>Large-scale proteomics analysis of the human kinome.</title>
        <authorList>
            <person name="Oppermann F.S."/>
            <person name="Gnad F."/>
            <person name="Olsen J.V."/>
            <person name="Hornberger R."/>
            <person name="Greff Z."/>
            <person name="Keri G."/>
            <person name="Mann M."/>
            <person name="Daub H."/>
        </authorList>
    </citation>
    <scope>IDENTIFICATION BY MASS SPECTROMETRY [LARGE SCALE ANALYSIS]</scope>
</reference>
<reference key="10">
    <citation type="journal article" date="2012" name="Proc. Natl. Acad. Sci. U.S.A.">
        <title>N-terminal acetylome analyses and functional insights of the N-terminal acetyltransferase NatB.</title>
        <authorList>
            <person name="Van Damme P."/>
            <person name="Lasa M."/>
            <person name="Polevoda B."/>
            <person name="Gazquez C."/>
            <person name="Elosegui-Artola A."/>
            <person name="Kim D.S."/>
            <person name="De Juan-Pardo E."/>
            <person name="Demeyer K."/>
            <person name="Hole K."/>
            <person name="Larrea E."/>
            <person name="Timmerman E."/>
            <person name="Prieto J."/>
            <person name="Arnesen T."/>
            <person name="Sherman F."/>
            <person name="Gevaert K."/>
            <person name="Aldabe R."/>
        </authorList>
    </citation>
    <scope>ACETYLATION [LARGE SCALE ANALYSIS] AT MET-1</scope>
    <scope>IDENTIFICATION BY MASS SPECTROMETRY [LARGE SCALE ANALYSIS]</scope>
</reference>
<reference key="11">
    <citation type="journal article" date="2013" name="J. Proteome Res.">
        <title>Toward a comprehensive characterization of a human cancer cell phosphoproteome.</title>
        <authorList>
            <person name="Zhou H."/>
            <person name="Di Palma S."/>
            <person name="Preisinger C."/>
            <person name="Peng M."/>
            <person name="Polat A.N."/>
            <person name="Heck A.J."/>
            <person name="Mohammed S."/>
        </authorList>
    </citation>
    <scope>PHOSPHORYLATION [LARGE SCALE ANALYSIS] AT SER-11</scope>
    <scope>IDENTIFICATION BY MASS SPECTROMETRY [LARGE SCALE ANALYSIS]</scope>
    <source>
        <tissue>Cervix carcinoma</tissue>
        <tissue>Erythroleukemia</tissue>
    </source>
</reference>
<reference key="12">
    <citation type="journal article" date="2014" name="J. Proteomics">
        <title>An enzyme assisted RP-RPLC approach for in-depth analysis of human liver phosphoproteome.</title>
        <authorList>
            <person name="Bian Y."/>
            <person name="Song C."/>
            <person name="Cheng K."/>
            <person name="Dong M."/>
            <person name="Wang F."/>
            <person name="Huang J."/>
            <person name="Sun D."/>
            <person name="Wang L."/>
            <person name="Ye M."/>
            <person name="Zou H."/>
        </authorList>
    </citation>
    <scope>IDENTIFICATION BY MASS SPECTROMETRY [LARGE SCALE ANALYSIS]</scope>
    <source>
        <tissue>Liver</tissue>
    </source>
</reference>
<reference key="13">
    <citation type="journal article" date="2016" name="Sci. Rep.">
        <title>NECAB3 promotes activation of hypoxia-inducible factor-1 during normoxia and enhances tumourigenicity of cancer cells.</title>
        <authorList>
            <person name="Nakaoka H.J."/>
            <person name="Hara T."/>
            <person name="Yoshino S."/>
            <person name="Kanamori A."/>
            <person name="Matsui Y."/>
            <person name="Shimamura T."/>
            <person name="Sato H."/>
            <person name="Murakami Y."/>
            <person name="Seiki M."/>
            <person name="Sakamoto T."/>
        </authorList>
    </citation>
    <scope>INTERACTION WITH NECAB3</scope>
</reference>
<reference key="14">
    <citation type="submission" date="2008-04" db="PDB data bank">
        <title>Solution structure of the PDZ domain of amyloid beta A4 precursor protein-binding family A member 3.</title>
        <authorList>
            <consortium name="RIKEN structural genomics initiative (RSGI)"/>
        </authorList>
    </citation>
    <scope>STRUCTURE BY NMR OF 387-569</scope>
</reference>
<comment type="function">
    <text evidence="5">May modulate processing of the amyloid-beta precursor protein (APP) and hence formation of APP-beta. May enhance the activity of HIF1A in macrophages by inhibiting the activity of HIF1AN.</text>
</comment>
<comment type="subunit">
    <text evidence="5 6">Binds to the cytoplasmic domain of amyloid protein (APP) in vivo. Interacts with HIF1AN (via N-terminus). Interacts with NECAB3; seems to mediate the interaction between NECAB3 and HIF1AN.</text>
</comment>
<comment type="interaction">
    <interactant intactId="EBI-6115839">
        <id>O96018</id>
    </interactant>
    <interactant intactId="EBI-79306">
        <id>Q06481</id>
        <label>APLP2</label>
    </interactant>
    <organismsDiffer>false</organismsDiffer>
    <experiments>4</experiments>
</comment>
<comment type="interaction">
    <interactant intactId="EBI-6115839">
        <id>O96018</id>
    </interactant>
    <interactant intactId="EBI-77613">
        <id>P05067</id>
        <label>APP</label>
    </interactant>
    <organismsDiffer>false</organismsDiffer>
    <experiments>6</experiments>
</comment>
<comment type="interaction">
    <interactant intactId="EBI-6115839">
        <id>O96018</id>
    </interactant>
    <interactant intactId="EBI-745632">
        <id>Q9NWT6</id>
        <label>HIF1AN</label>
    </interactant>
    <organismsDiffer>false</organismsDiffer>
    <experiments>10</experiments>
</comment>
<comment type="interaction">
    <interactant intactId="EBI-6115839">
        <id>O96018</id>
    </interactant>
    <interactant intactId="EBI-5773009">
        <id>Q96P71</id>
        <label>NECAB3</label>
    </interactant>
    <organismsDiffer>false</organismsDiffer>
    <experiments>5</experiments>
</comment>
<comment type="interaction">
    <interactant intactId="EBI-6115839">
        <id>O96018</id>
    </interactant>
    <interactant intactId="EBI-15098952">
        <id>Q96P71-2</id>
        <label>NECAB3</label>
    </interactant>
    <organismsDiffer>false</organismsDiffer>
    <experiments>4</experiments>
</comment>
<comment type="interaction">
    <interactant intactId="EBI-6115839">
        <id>O96018</id>
    </interactant>
    <interactant intactId="EBI-356349">
        <id>Q92844</id>
        <label>TANK</label>
    </interactant>
    <organismsDiffer>false</organismsDiffer>
    <experiments>2</experiments>
</comment>
<comment type="interaction">
    <interactant intactId="EBI-6115839">
        <id>O96018</id>
    </interactant>
    <interactant intactId="EBI-359969">
        <id>A7MCY6</id>
        <label>TBKBP1</label>
    </interactant>
    <organismsDiffer>false</organismsDiffer>
    <experiments>2</experiments>
</comment>
<comment type="interaction">
    <interactant intactId="EBI-6115839">
        <id>O96018</id>
    </interactant>
    <interactant intactId="EBI-6115874">
        <id>Q9QYP6</id>
        <label>Azi2</label>
    </interactant>
    <organismsDiffer>true</organismsDiffer>
    <experiments>2</experiments>
</comment>
<comment type="subcellular location">
    <subcellularLocation>
        <location evidence="5">Cytoplasm</location>
        <location evidence="5">Perinuclear region</location>
    </subcellularLocation>
</comment>
<comment type="tissue specificity">
    <text>Expressed in all tissues examined with lower levels in brain and testis.</text>
</comment>
<comment type="domain">
    <text>Composed of an N-terminal domain, a middle phosphotyrosine-binding domain (PID/PTB) that mediates binding with the cytoplasmic domain of the amyloid-beta precursor protein, and two C-terminal PDZ domains thought to attach proteins to the plasma membrane.</text>
</comment>